<gene>
    <name type="primary">SQD1</name>
    <name type="ordered locus">At4g33030</name>
    <name type="ORF">F26P21.150</name>
</gene>
<feature type="transit peptide" description="Chloroplast" evidence="7">
    <location>
        <begin position="1"/>
        <end position="86"/>
    </location>
</feature>
<feature type="chain" id="PRO_0000010469" description="UDP-sulfoquinovose synthase, chloroplastic">
    <location>
        <begin position="87"/>
        <end position="477"/>
    </location>
</feature>
<feature type="region of interest" description="Disordered" evidence="1">
    <location>
        <begin position="1"/>
        <end position="21"/>
    </location>
</feature>
<feature type="active site" evidence="6 11">
    <location>
        <position position="228"/>
    </location>
</feature>
<feature type="active site" description="Proton acceptor" evidence="6 11">
    <location>
        <position position="265"/>
    </location>
</feature>
<feature type="active site" evidence="6 11">
    <location>
        <position position="269"/>
    </location>
</feature>
<feature type="binding site" evidence="2 6 8 9 10 11">
    <location>
        <begin position="95"/>
        <end position="96"/>
    </location>
    <ligand>
        <name>NAD(+)</name>
        <dbReference type="ChEBI" id="CHEBI:57540"/>
    </ligand>
</feature>
<feature type="binding site" evidence="2 6 8 9 10 11">
    <location>
        <begin position="115"/>
        <end position="119"/>
    </location>
    <ligand>
        <name>NAD(+)</name>
        <dbReference type="ChEBI" id="CHEBI:57540"/>
    </ligand>
</feature>
<feature type="binding site" evidence="2 6 8 9 10 11">
    <location>
        <begin position="158"/>
        <end position="159"/>
    </location>
    <ligand>
        <name>NAD(+)</name>
        <dbReference type="ChEBI" id="CHEBI:57540"/>
    </ligand>
</feature>
<feature type="binding site" evidence="2 6 8 9 10 11">
    <location>
        <position position="184"/>
    </location>
    <ligand>
        <name>NAD(+)</name>
        <dbReference type="ChEBI" id="CHEBI:57540"/>
    </ligand>
</feature>
<feature type="binding site" evidence="2 6 8 9 10 11">
    <location>
        <position position="184"/>
    </location>
    <ligand>
        <name>substrate</name>
    </ligand>
</feature>
<feature type="binding site" evidence="2 6 8 9 10 11">
    <location>
        <position position="202"/>
    </location>
    <ligand>
        <name>NAD(+)</name>
        <dbReference type="ChEBI" id="CHEBI:57540"/>
    </ligand>
</feature>
<feature type="binding site" evidence="6 11">
    <location>
        <position position="228"/>
    </location>
    <ligand>
        <name>substrate</name>
    </ligand>
</feature>
<feature type="binding site" evidence="2 6 8 9 10 11">
    <location>
        <position position="265"/>
    </location>
    <ligand>
        <name>NAD(+)</name>
        <dbReference type="ChEBI" id="CHEBI:57540"/>
    </ligand>
</feature>
<feature type="binding site" evidence="2 6 8 9 10 11">
    <location>
        <position position="265"/>
    </location>
    <ligand>
        <name>substrate</name>
    </ligand>
</feature>
<feature type="binding site" evidence="2 6 8 9 10 11">
    <location>
        <position position="269"/>
    </location>
    <ligand>
        <name>NAD(+)</name>
        <dbReference type="ChEBI" id="CHEBI:57540"/>
    </ligand>
</feature>
<feature type="binding site" evidence="6 11">
    <location>
        <position position="292"/>
    </location>
    <ligand>
        <name>substrate</name>
    </ligand>
</feature>
<feature type="binding site" evidence="2 6 8 9 10 11">
    <location>
        <position position="295"/>
    </location>
    <ligand>
        <name>NAD(+)</name>
        <dbReference type="ChEBI" id="CHEBI:57540"/>
    </ligand>
</feature>
<feature type="binding site" evidence="2 6 8 9 10 11">
    <location>
        <begin position="322"/>
        <end position="325"/>
    </location>
    <ligand>
        <name>substrate</name>
    </ligand>
</feature>
<feature type="binding site" evidence="2 6 8 9 10 11">
    <location>
        <begin position="337"/>
        <end position="339"/>
    </location>
    <ligand>
        <name>substrate</name>
    </ligand>
</feature>
<feature type="binding site" evidence="2 6 8 9 10 11">
    <location>
        <begin position="410"/>
        <end position="412"/>
    </location>
    <ligand>
        <name>substrate</name>
    </ligand>
</feature>
<feature type="mutagenesis site" description="Loss of activity." evidence="3">
    <original>T</original>
    <variation>A</variation>
    <location>
        <position position="228"/>
    </location>
</feature>
<feature type="strand" evidence="12">
    <location>
        <begin position="86"/>
        <end position="90"/>
    </location>
</feature>
<feature type="turn" evidence="12">
    <location>
        <begin position="91"/>
        <end position="93"/>
    </location>
</feature>
<feature type="helix" evidence="12">
    <location>
        <begin position="95"/>
        <end position="106"/>
    </location>
</feature>
<feature type="strand" evidence="12">
    <location>
        <begin position="110"/>
        <end position="115"/>
    </location>
</feature>
<feature type="helix" evidence="12">
    <location>
        <begin position="118"/>
        <end position="126"/>
    </location>
</feature>
<feature type="helix" evidence="12">
    <location>
        <begin position="137"/>
        <end position="148"/>
    </location>
</feature>
<feature type="strand" evidence="12">
    <location>
        <begin position="153"/>
        <end position="157"/>
    </location>
</feature>
<feature type="helix" evidence="12">
    <location>
        <begin position="162"/>
        <end position="172"/>
    </location>
</feature>
<feature type="strand" evidence="12">
    <location>
        <begin position="175"/>
        <end position="179"/>
    </location>
</feature>
<feature type="helix" evidence="12">
    <location>
        <begin position="186"/>
        <end position="189"/>
    </location>
</feature>
<feature type="helix" evidence="12">
    <location>
        <begin position="193"/>
        <end position="217"/>
    </location>
</feature>
<feature type="strand" evidence="12">
    <location>
        <begin position="222"/>
        <end position="226"/>
    </location>
</feature>
<feature type="helix" evidence="12">
    <location>
        <begin position="229"/>
        <end position="232"/>
    </location>
</feature>
<feature type="strand" evidence="12">
    <location>
        <begin position="241"/>
        <end position="248"/>
    </location>
</feature>
<feature type="strand" evidence="12">
    <location>
        <begin position="251"/>
        <end position="256"/>
    </location>
</feature>
<feature type="helix" evidence="12">
    <location>
        <begin position="264"/>
        <end position="283"/>
    </location>
</feature>
<feature type="strand" evidence="12">
    <location>
        <begin position="286"/>
        <end position="292"/>
    </location>
</feature>
<feature type="strand" evidence="12">
    <location>
        <begin position="294"/>
        <end position="296"/>
    </location>
</feature>
<feature type="helix" evidence="12">
    <location>
        <begin position="303"/>
        <end position="305"/>
    </location>
</feature>
<feature type="helix" evidence="12">
    <location>
        <begin position="307"/>
        <end position="309"/>
    </location>
</feature>
<feature type="turn" evidence="12">
    <location>
        <begin position="317"/>
        <end position="319"/>
    </location>
</feature>
<feature type="helix" evidence="12">
    <location>
        <begin position="322"/>
        <end position="332"/>
    </location>
</feature>
<feature type="strand" evidence="12">
    <location>
        <begin position="336"/>
        <end position="339"/>
    </location>
</feature>
<feature type="strand" evidence="12">
    <location>
        <begin position="345"/>
        <end position="350"/>
    </location>
</feature>
<feature type="helix" evidence="12">
    <location>
        <begin position="351"/>
        <end position="363"/>
    </location>
</feature>
<feature type="strand" evidence="12">
    <location>
        <begin position="371"/>
        <end position="376"/>
    </location>
</feature>
<feature type="strand" evidence="12">
    <location>
        <begin position="378"/>
        <end position="382"/>
    </location>
</feature>
<feature type="helix" evidence="12">
    <location>
        <begin position="383"/>
        <end position="395"/>
    </location>
</feature>
<feature type="turn" evidence="12">
    <location>
        <begin position="396"/>
        <end position="398"/>
    </location>
</feature>
<feature type="strand" evidence="12">
    <location>
        <begin position="403"/>
        <end position="406"/>
    </location>
</feature>
<feature type="helix" evidence="12">
    <location>
        <begin position="424"/>
        <end position="427"/>
    </location>
</feature>
<feature type="helix" evidence="12">
    <location>
        <begin position="437"/>
        <end position="449"/>
    </location>
</feature>
<feature type="helix" evidence="12">
    <location>
        <begin position="451"/>
        <end position="453"/>
    </location>
</feature>
<feature type="helix" evidence="12">
    <location>
        <begin position="456"/>
        <end position="458"/>
    </location>
</feature>
<feature type="turn" evidence="12">
    <location>
        <begin position="465"/>
        <end position="467"/>
    </location>
</feature>
<feature type="strand" evidence="13">
    <location>
        <begin position="469"/>
        <end position="471"/>
    </location>
</feature>
<organism>
    <name type="scientific">Arabidopsis thaliana</name>
    <name type="common">Mouse-ear cress</name>
    <dbReference type="NCBI Taxonomy" id="3702"/>
    <lineage>
        <taxon>Eukaryota</taxon>
        <taxon>Viridiplantae</taxon>
        <taxon>Streptophyta</taxon>
        <taxon>Embryophyta</taxon>
        <taxon>Tracheophyta</taxon>
        <taxon>Spermatophyta</taxon>
        <taxon>Magnoliopsida</taxon>
        <taxon>eudicotyledons</taxon>
        <taxon>Gunneridae</taxon>
        <taxon>Pentapetalae</taxon>
        <taxon>rosids</taxon>
        <taxon>malvids</taxon>
        <taxon>Brassicales</taxon>
        <taxon>Brassicaceae</taxon>
        <taxon>Camelineae</taxon>
        <taxon>Arabidopsis</taxon>
    </lineage>
</organism>
<sequence>MAHLLSASCPSVISLSSSSSKNSVKPFVSGQTFFNAQLLSRSSLKGLLFQEKKPRKSCVFRATAVPITQQAPPETSTNNSSSKPKRVMVIGGDGYCGWATALHLSKKNYEVCIVDNLVRRLFDHQLGLESLTPIASIHDRISRWKALTGKSIELYVGDICDFEFLAESFKSFEPDSVVHFGEQRSAPYSMIDRSRAVYTQHNNVIGTLNVLFAIKEFGEECHLVKLGTMGEYGTPNIDIEEGYITITHNGRTDTLPYPKQASSFYHLSKVHDSHNIAFTCKAWGIRATDLNQGVVYGVKTDETEMHEELRNRLDYDAVFGTALNRFCVQAAVGHPLTVYGKGGQTRGYLDIRDTVQCVEIAIANPAKAGEFRVFNQFTEQFSVNELASLVTKAGSKLGLDVKKMTVPNPRVEAEEHYYNAKHTKLMELGLEPHYLSDSLLDSLLNFAVQFKDRVDTKQIMPSVSWKKIGVKTKSMTT</sequence>
<accession>O48917</accession>
<keyword id="KW-0002">3D-structure</keyword>
<keyword id="KW-0150">Chloroplast</keyword>
<keyword id="KW-0378">Hydrolase</keyword>
<keyword id="KW-0520">NAD</keyword>
<keyword id="KW-0934">Plastid</keyword>
<keyword id="KW-1185">Reference proteome</keyword>
<keyword id="KW-0809">Transit peptide</keyword>
<evidence type="ECO:0000256" key="1">
    <source>
        <dbReference type="SAM" id="MobiDB-lite"/>
    </source>
</evidence>
<evidence type="ECO:0000269" key="2">
    <source>
    </source>
</evidence>
<evidence type="ECO:0000269" key="3">
    <source>
    </source>
</evidence>
<evidence type="ECO:0000269" key="4">
    <source>
    </source>
</evidence>
<evidence type="ECO:0000269" key="5">
    <source>
    </source>
</evidence>
<evidence type="ECO:0000269" key="6">
    <source ref="8"/>
</evidence>
<evidence type="ECO:0000305" key="7"/>
<evidence type="ECO:0007744" key="8">
    <source>
        <dbReference type="PDB" id="1I24"/>
    </source>
</evidence>
<evidence type="ECO:0007744" key="9">
    <source>
        <dbReference type="PDB" id="1I2B"/>
    </source>
</evidence>
<evidence type="ECO:0007744" key="10">
    <source>
        <dbReference type="PDB" id="1I2C"/>
    </source>
</evidence>
<evidence type="ECO:0007744" key="11">
    <source>
        <dbReference type="PDB" id="1QRR"/>
    </source>
</evidence>
<evidence type="ECO:0007829" key="12">
    <source>
        <dbReference type="PDB" id="1I24"/>
    </source>
</evidence>
<evidence type="ECO:0007829" key="13">
    <source>
        <dbReference type="PDB" id="1I2C"/>
    </source>
</evidence>
<proteinExistence type="evidence at protein level"/>
<name>SQD1_ARATH</name>
<dbReference type="EC" id="3.13.1.1"/>
<dbReference type="EMBL" id="AF022082">
    <property type="protein sequence ID" value="AAB94073.1"/>
    <property type="molecule type" value="mRNA"/>
</dbReference>
<dbReference type="EMBL" id="AL031804">
    <property type="protein sequence ID" value="CAA21212.1"/>
    <property type="molecule type" value="Genomic_DNA"/>
</dbReference>
<dbReference type="EMBL" id="AL161582">
    <property type="protein sequence ID" value="CAB80020.1"/>
    <property type="molecule type" value="Genomic_DNA"/>
</dbReference>
<dbReference type="EMBL" id="CP002687">
    <property type="protein sequence ID" value="AEE86162.1"/>
    <property type="molecule type" value="Genomic_DNA"/>
</dbReference>
<dbReference type="EMBL" id="AF380641">
    <property type="protein sequence ID" value="AAK55722.1"/>
    <property type="molecule type" value="mRNA"/>
</dbReference>
<dbReference type="EMBL" id="AY113071">
    <property type="protein sequence ID" value="AAM47379.1"/>
    <property type="molecule type" value="mRNA"/>
</dbReference>
<dbReference type="PIR" id="T05311">
    <property type="entry name" value="T05311"/>
</dbReference>
<dbReference type="RefSeq" id="NP_195029.1">
    <property type="nucleotide sequence ID" value="NM_119457.4"/>
</dbReference>
<dbReference type="PDB" id="1I24">
    <property type="method" value="X-ray"/>
    <property type="resolution" value="1.20 A"/>
    <property type="chains" value="A=86-477"/>
</dbReference>
<dbReference type="PDB" id="1I2B">
    <property type="method" value="X-ray"/>
    <property type="resolution" value="1.75 A"/>
    <property type="chains" value="A=86-477"/>
</dbReference>
<dbReference type="PDB" id="1I2C">
    <property type="method" value="X-ray"/>
    <property type="resolution" value="1.60 A"/>
    <property type="chains" value="A=86-477"/>
</dbReference>
<dbReference type="PDB" id="1QRR">
    <property type="method" value="X-ray"/>
    <property type="resolution" value="1.60 A"/>
    <property type="chains" value="A=84-477"/>
</dbReference>
<dbReference type="PDBsum" id="1I24"/>
<dbReference type="PDBsum" id="1I2B"/>
<dbReference type="PDBsum" id="1I2C"/>
<dbReference type="PDBsum" id="1QRR"/>
<dbReference type="SMR" id="O48917"/>
<dbReference type="BioGRID" id="14725">
    <property type="interactions" value="8"/>
</dbReference>
<dbReference type="FunCoup" id="O48917">
    <property type="interactions" value="364"/>
</dbReference>
<dbReference type="IntAct" id="O48917">
    <property type="interactions" value="1"/>
</dbReference>
<dbReference type="STRING" id="3702.O48917"/>
<dbReference type="iPTMnet" id="O48917"/>
<dbReference type="PaxDb" id="3702-AT4G33030.1"/>
<dbReference type="ProteomicsDB" id="226854"/>
<dbReference type="EnsemblPlants" id="AT4G33030.1">
    <property type="protein sequence ID" value="AT4G33030.1"/>
    <property type="gene ID" value="AT4G33030"/>
</dbReference>
<dbReference type="GeneID" id="829440"/>
<dbReference type="Gramene" id="AT4G33030.1">
    <property type="protein sequence ID" value="AT4G33030.1"/>
    <property type="gene ID" value="AT4G33030"/>
</dbReference>
<dbReference type="KEGG" id="ath:AT4G33030"/>
<dbReference type="Araport" id="AT4G33030"/>
<dbReference type="TAIR" id="AT4G33030">
    <property type="gene designation" value="SQD1"/>
</dbReference>
<dbReference type="eggNOG" id="KOG1371">
    <property type="taxonomic scope" value="Eukaryota"/>
</dbReference>
<dbReference type="HOGENOM" id="CLU_040971_1_0_1"/>
<dbReference type="InParanoid" id="O48917"/>
<dbReference type="OMA" id="YGTAGMK"/>
<dbReference type="OrthoDB" id="494308at2759"/>
<dbReference type="PhylomeDB" id="O48917"/>
<dbReference type="BioCyc" id="MetaCyc:MONOMER-1201"/>
<dbReference type="BRENDA" id="3.13.1.1">
    <property type="organism ID" value="399"/>
</dbReference>
<dbReference type="CD-CODE" id="4299E36E">
    <property type="entry name" value="Nucleolus"/>
</dbReference>
<dbReference type="EvolutionaryTrace" id="O48917"/>
<dbReference type="PRO" id="PR:O48917"/>
<dbReference type="Proteomes" id="UP000006548">
    <property type="component" value="Chromosome 4"/>
</dbReference>
<dbReference type="ExpressionAtlas" id="O48917">
    <property type="expression patterns" value="baseline and differential"/>
</dbReference>
<dbReference type="GO" id="GO:0009507">
    <property type="term" value="C:chloroplast"/>
    <property type="evidence" value="ECO:0000314"/>
    <property type="project" value="TAIR"/>
</dbReference>
<dbReference type="GO" id="GO:0005886">
    <property type="term" value="C:plasma membrane"/>
    <property type="evidence" value="ECO:0007005"/>
    <property type="project" value="TAIR"/>
</dbReference>
<dbReference type="GO" id="GO:0008146">
    <property type="term" value="F:sulfotransferase activity"/>
    <property type="evidence" value="ECO:0000314"/>
    <property type="project" value="TAIR"/>
</dbReference>
<dbReference type="GO" id="GO:0046507">
    <property type="term" value="F:UDPsulfoquinovose synthase activity"/>
    <property type="evidence" value="ECO:0007669"/>
    <property type="project" value="UniProtKB-EC"/>
</dbReference>
<dbReference type="GO" id="GO:0008270">
    <property type="term" value="F:zinc ion binding"/>
    <property type="evidence" value="ECO:0007005"/>
    <property type="project" value="TAIR"/>
</dbReference>
<dbReference type="GO" id="GO:0016036">
    <property type="term" value="P:cellular response to phosphate starvation"/>
    <property type="evidence" value="ECO:0000270"/>
    <property type="project" value="TAIR"/>
</dbReference>
<dbReference type="GO" id="GO:0009247">
    <property type="term" value="P:glycolipid biosynthetic process"/>
    <property type="evidence" value="ECO:0000314"/>
    <property type="project" value="TAIR"/>
</dbReference>
<dbReference type="CDD" id="cd05255">
    <property type="entry name" value="SQD1_like_SDR_e"/>
    <property type="match status" value="1"/>
</dbReference>
<dbReference type="Gene3D" id="3.40.50.720">
    <property type="entry name" value="NAD(P)-binding Rossmann-like Domain"/>
    <property type="match status" value="1"/>
</dbReference>
<dbReference type="Gene3D" id="3.90.25.10">
    <property type="entry name" value="UDP-galactose 4-epimerase, domain 1"/>
    <property type="match status" value="1"/>
</dbReference>
<dbReference type="InterPro" id="IPR001509">
    <property type="entry name" value="Epimerase_deHydtase"/>
</dbReference>
<dbReference type="InterPro" id="IPR036291">
    <property type="entry name" value="NAD(P)-bd_dom_sf"/>
</dbReference>
<dbReference type="PANTHER" id="PTHR43000">
    <property type="entry name" value="DTDP-D-GLUCOSE 4,6-DEHYDRATASE-RELATED"/>
    <property type="match status" value="1"/>
</dbReference>
<dbReference type="Pfam" id="PF01370">
    <property type="entry name" value="Epimerase"/>
    <property type="match status" value="1"/>
</dbReference>
<dbReference type="SUPFAM" id="SSF51735">
    <property type="entry name" value="NAD(P)-binding Rossmann-fold domains"/>
    <property type="match status" value="1"/>
</dbReference>
<comment type="function">
    <text evidence="3">Involved in the biosynthesis of sulfolipids found in thylakoid membranes. Converts UDP-glucose and sulfite to the sulfolipid head group precursor UDP-sulfoquinovose.</text>
</comment>
<comment type="catalytic activity">
    <reaction>
        <text>sulfite + UDP-alpha-D-glucose + H(+) = UDP-alpha-D-6-sulfoquinovose + H2O</text>
        <dbReference type="Rhea" id="RHEA:13197"/>
        <dbReference type="ChEBI" id="CHEBI:15377"/>
        <dbReference type="ChEBI" id="CHEBI:15378"/>
        <dbReference type="ChEBI" id="CHEBI:17359"/>
        <dbReference type="ChEBI" id="CHEBI:58885"/>
        <dbReference type="ChEBI" id="CHEBI:60009"/>
        <dbReference type="EC" id="3.13.1.1"/>
    </reaction>
</comment>
<comment type="cofactor">
    <cofactor>
        <name>NAD(+)</name>
        <dbReference type="ChEBI" id="CHEBI:57540"/>
    </cofactor>
</comment>
<comment type="activity regulation">
    <text>Concentrations above 100 uM sulfite inhibit the reaction.</text>
</comment>
<comment type="biophysicochemical properties">
    <kinetics>
        <KM>150 uM for UDP-glucose</KM>
        <KM>10 uM for sulfite</KM>
    </kinetics>
    <phDependence>
        <text>Optimum pH is 7.5-9.5.</text>
    </phDependence>
</comment>
<comment type="subunit">
    <text evidence="2">Homodimer.</text>
</comment>
<comment type="subcellular location">
    <subcellularLocation>
        <location evidence="5">Plastid</location>
        <location evidence="5">Chloroplast</location>
    </subcellularLocation>
</comment>
<comment type="induction">
    <text evidence="4 5">Induced in response to altered availability of inorganic phosphate.</text>
</comment>
<comment type="similarity">
    <text evidence="7">Belongs to the NAD(P)-dependent epimerase/dehydratase family.</text>
</comment>
<reference key="1">
    <citation type="journal article" date="1998" name="Proc. Natl. Acad. Sci. U.S.A.">
        <title>Phosphate availability affects the thylakoid lipid composition and the expression of SQD1, a gene required for sulfolipid biosynthesis in Arabidopsis thaliana.</title>
        <authorList>
            <person name="Essigmann B."/>
            <person name="Gueler S."/>
            <person name="Narang R.A."/>
            <person name="Linke D."/>
            <person name="Benning C."/>
        </authorList>
    </citation>
    <scope>NUCLEOTIDE SEQUENCE [MRNA]</scope>
    <scope>SUBCELLULAR LOCATION</scope>
    <scope>INDUCTION</scope>
    <source>
        <strain>cv. Col-2</strain>
    </source>
</reference>
<reference key="2">
    <citation type="journal article" date="1999" name="Nature">
        <title>Sequence and analysis of chromosome 4 of the plant Arabidopsis thaliana.</title>
        <authorList>
            <person name="Mayer K.F.X."/>
            <person name="Schueller C."/>
            <person name="Wambutt R."/>
            <person name="Murphy G."/>
            <person name="Volckaert G."/>
            <person name="Pohl T."/>
            <person name="Duesterhoeft A."/>
            <person name="Stiekema W."/>
            <person name="Entian K.-D."/>
            <person name="Terryn N."/>
            <person name="Harris B."/>
            <person name="Ansorge W."/>
            <person name="Brandt P."/>
            <person name="Grivell L.A."/>
            <person name="Rieger M."/>
            <person name="Weichselgartner M."/>
            <person name="de Simone V."/>
            <person name="Obermaier B."/>
            <person name="Mache R."/>
            <person name="Mueller M."/>
            <person name="Kreis M."/>
            <person name="Delseny M."/>
            <person name="Puigdomenech P."/>
            <person name="Watson M."/>
            <person name="Schmidtheini T."/>
            <person name="Reichert B."/>
            <person name="Portetelle D."/>
            <person name="Perez-Alonso M."/>
            <person name="Boutry M."/>
            <person name="Bancroft I."/>
            <person name="Vos P."/>
            <person name="Hoheisel J."/>
            <person name="Zimmermann W."/>
            <person name="Wedler H."/>
            <person name="Ridley P."/>
            <person name="Langham S.-A."/>
            <person name="McCullagh B."/>
            <person name="Bilham L."/>
            <person name="Robben J."/>
            <person name="van der Schueren J."/>
            <person name="Grymonprez B."/>
            <person name="Chuang Y.-J."/>
            <person name="Vandenbussche F."/>
            <person name="Braeken M."/>
            <person name="Weltjens I."/>
            <person name="Voet M."/>
            <person name="Bastiaens I."/>
            <person name="Aert R."/>
            <person name="Defoor E."/>
            <person name="Weitzenegger T."/>
            <person name="Bothe G."/>
            <person name="Ramsperger U."/>
            <person name="Hilbert H."/>
            <person name="Braun M."/>
            <person name="Holzer E."/>
            <person name="Brandt A."/>
            <person name="Peters S."/>
            <person name="van Staveren M."/>
            <person name="Dirkse W."/>
            <person name="Mooijman P."/>
            <person name="Klein Lankhorst R."/>
            <person name="Rose M."/>
            <person name="Hauf J."/>
            <person name="Koetter P."/>
            <person name="Berneiser S."/>
            <person name="Hempel S."/>
            <person name="Feldpausch M."/>
            <person name="Lamberth S."/>
            <person name="Van den Daele H."/>
            <person name="De Keyser A."/>
            <person name="Buysshaert C."/>
            <person name="Gielen J."/>
            <person name="Villarroel R."/>
            <person name="De Clercq R."/>
            <person name="van Montagu M."/>
            <person name="Rogers J."/>
            <person name="Cronin A."/>
            <person name="Quail M.A."/>
            <person name="Bray-Allen S."/>
            <person name="Clark L."/>
            <person name="Doggett J."/>
            <person name="Hall S."/>
            <person name="Kay M."/>
            <person name="Lennard N."/>
            <person name="McLay K."/>
            <person name="Mayes R."/>
            <person name="Pettett A."/>
            <person name="Rajandream M.A."/>
            <person name="Lyne M."/>
            <person name="Benes V."/>
            <person name="Rechmann S."/>
            <person name="Borkova D."/>
            <person name="Bloecker H."/>
            <person name="Scharfe M."/>
            <person name="Grimm M."/>
            <person name="Loehnert T.-H."/>
            <person name="Dose S."/>
            <person name="de Haan M."/>
            <person name="Maarse A.C."/>
            <person name="Schaefer M."/>
            <person name="Mueller-Auer S."/>
            <person name="Gabel C."/>
            <person name="Fuchs M."/>
            <person name="Fartmann B."/>
            <person name="Granderath K."/>
            <person name="Dauner D."/>
            <person name="Herzl A."/>
            <person name="Neumann S."/>
            <person name="Argiriou A."/>
            <person name="Vitale D."/>
            <person name="Liguori R."/>
            <person name="Piravandi E."/>
            <person name="Massenet O."/>
            <person name="Quigley F."/>
            <person name="Clabauld G."/>
            <person name="Muendlein A."/>
            <person name="Felber R."/>
            <person name="Schnabl S."/>
            <person name="Hiller R."/>
            <person name="Schmidt W."/>
            <person name="Lecharny A."/>
            <person name="Aubourg S."/>
            <person name="Chefdor F."/>
            <person name="Cooke R."/>
            <person name="Berger C."/>
            <person name="Monfort A."/>
            <person name="Casacuberta E."/>
            <person name="Gibbons T."/>
            <person name="Weber N."/>
            <person name="Vandenbol M."/>
            <person name="Bargues M."/>
            <person name="Terol J."/>
            <person name="Torres A."/>
            <person name="Perez-Perez A."/>
            <person name="Purnelle B."/>
            <person name="Bent E."/>
            <person name="Johnson S."/>
            <person name="Tacon D."/>
            <person name="Jesse T."/>
            <person name="Heijnen L."/>
            <person name="Schwarz S."/>
            <person name="Scholler P."/>
            <person name="Heber S."/>
            <person name="Francs P."/>
            <person name="Bielke C."/>
            <person name="Frishman D."/>
            <person name="Haase D."/>
            <person name="Lemcke K."/>
            <person name="Mewes H.-W."/>
            <person name="Stocker S."/>
            <person name="Zaccaria P."/>
            <person name="Bevan M."/>
            <person name="Wilson R.K."/>
            <person name="de la Bastide M."/>
            <person name="Habermann K."/>
            <person name="Parnell L."/>
            <person name="Dedhia N."/>
            <person name="Gnoj L."/>
            <person name="Schutz K."/>
            <person name="Huang E."/>
            <person name="Spiegel L."/>
            <person name="Sekhon M."/>
            <person name="Murray J."/>
            <person name="Sheet P."/>
            <person name="Cordes M."/>
            <person name="Abu-Threideh J."/>
            <person name="Stoneking T."/>
            <person name="Kalicki J."/>
            <person name="Graves T."/>
            <person name="Harmon G."/>
            <person name="Edwards J."/>
            <person name="Latreille P."/>
            <person name="Courtney L."/>
            <person name="Cloud J."/>
            <person name="Abbott A."/>
            <person name="Scott K."/>
            <person name="Johnson D."/>
            <person name="Minx P."/>
            <person name="Bentley D."/>
            <person name="Fulton B."/>
            <person name="Miller N."/>
            <person name="Greco T."/>
            <person name="Kemp K."/>
            <person name="Kramer J."/>
            <person name="Fulton L."/>
            <person name="Mardis E."/>
            <person name="Dante M."/>
            <person name="Pepin K."/>
            <person name="Hillier L.W."/>
            <person name="Nelson J."/>
            <person name="Spieth J."/>
            <person name="Ryan E."/>
            <person name="Andrews S."/>
            <person name="Geisel C."/>
            <person name="Layman D."/>
            <person name="Du H."/>
            <person name="Ali J."/>
            <person name="Berghoff A."/>
            <person name="Jones K."/>
            <person name="Drone K."/>
            <person name="Cotton M."/>
            <person name="Joshu C."/>
            <person name="Antonoiu B."/>
            <person name="Zidanic M."/>
            <person name="Strong C."/>
            <person name="Sun H."/>
            <person name="Lamar B."/>
            <person name="Yordan C."/>
            <person name="Ma P."/>
            <person name="Zhong J."/>
            <person name="Preston R."/>
            <person name="Vil D."/>
            <person name="Shekher M."/>
            <person name="Matero A."/>
            <person name="Shah R."/>
            <person name="Swaby I.K."/>
            <person name="O'Shaughnessy A."/>
            <person name="Rodriguez M."/>
            <person name="Hoffman J."/>
            <person name="Till S."/>
            <person name="Granat S."/>
            <person name="Shohdy N."/>
            <person name="Hasegawa A."/>
            <person name="Hameed A."/>
            <person name="Lodhi M."/>
            <person name="Johnson A."/>
            <person name="Chen E."/>
            <person name="Marra M.A."/>
            <person name="Martienssen R."/>
            <person name="McCombie W.R."/>
        </authorList>
    </citation>
    <scope>NUCLEOTIDE SEQUENCE [LARGE SCALE GENOMIC DNA]</scope>
    <source>
        <strain>cv. Columbia</strain>
    </source>
</reference>
<reference key="3">
    <citation type="journal article" date="2017" name="Plant J.">
        <title>Araport11: a complete reannotation of the Arabidopsis thaliana reference genome.</title>
        <authorList>
            <person name="Cheng C.Y."/>
            <person name="Krishnakumar V."/>
            <person name="Chan A.P."/>
            <person name="Thibaud-Nissen F."/>
            <person name="Schobel S."/>
            <person name="Town C.D."/>
        </authorList>
    </citation>
    <scope>GENOME REANNOTATION</scope>
    <source>
        <strain>cv. Columbia</strain>
    </source>
</reference>
<reference key="4">
    <citation type="journal article" date="2003" name="Science">
        <title>Empirical analysis of transcriptional activity in the Arabidopsis genome.</title>
        <authorList>
            <person name="Yamada K."/>
            <person name="Lim J."/>
            <person name="Dale J.M."/>
            <person name="Chen H."/>
            <person name="Shinn P."/>
            <person name="Palm C.J."/>
            <person name="Southwick A.M."/>
            <person name="Wu H.C."/>
            <person name="Kim C.J."/>
            <person name="Nguyen M."/>
            <person name="Pham P.K."/>
            <person name="Cheuk R.F."/>
            <person name="Karlin-Newmann G."/>
            <person name="Liu S.X."/>
            <person name="Lam B."/>
            <person name="Sakano H."/>
            <person name="Wu T."/>
            <person name="Yu G."/>
            <person name="Miranda M."/>
            <person name="Quach H.L."/>
            <person name="Tripp M."/>
            <person name="Chang C.H."/>
            <person name="Lee J.M."/>
            <person name="Toriumi M.J."/>
            <person name="Chan M.M."/>
            <person name="Tang C.C."/>
            <person name="Onodera C.S."/>
            <person name="Deng J.M."/>
            <person name="Akiyama K."/>
            <person name="Ansari Y."/>
            <person name="Arakawa T."/>
            <person name="Banh J."/>
            <person name="Banno F."/>
            <person name="Bowser L."/>
            <person name="Brooks S.Y."/>
            <person name="Carninci P."/>
            <person name="Chao Q."/>
            <person name="Choy N."/>
            <person name="Enju A."/>
            <person name="Goldsmith A.D."/>
            <person name="Gurjal M."/>
            <person name="Hansen N.F."/>
            <person name="Hayashizaki Y."/>
            <person name="Johnson-Hopson C."/>
            <person name="Hsuan V.W."/>
            <person name="Iida K."/>
            <person name="Karnes M."/>
            <person name="Khan S."/>
            <person name="Koesema E."/>
            <person name="Ishida J."/>
            <person name="Jiang P.X."/>
            <person name="Jones T."/>
            <person name="Kawai J."/>
            <person name="Kamiya A."/>
            <person name="Meyers C."/>
            <person name="Nakajima M."/>
            <person name="Narusaka M."/>
            <person name="Seki M."/>
            <person name="Sakurai T."/>
            <person name="Satou M."/>
            <person name="Tamse R."/>
            <person name="Vaysberg M."/>
            <person name="Wallender E.K."/>
            <person name="Wong C."/>
            <person name="Yamamura Y."/>
            <person name="Yuan S."/>
            <person name="Shinozaki K."/>
            <person name="Davis R.W."/>
            <person name="Theologis A."/>
            <person name="Ecker J.R."/>
        </authorList>
    </citation>
    <scope>NUCLEOTIDE SEQUENCE [LARGE SCALE MRNA]</scope>
    <source>
        <strain>cv. Columbia</strain>
    </source>
</reference>
<reference key="5">
    <citation type="journal article" date="2001" name="J. Biol. Chem.">
        <title>Recombinant Arabidopsis SQD1 converts UDP-glucose and sulfite to the sulfolipid head group precursor UDP-sulfoquinovose in vitro.</title>
        <authorList>
            <person name="Sanda S."/>
            <person name="Leustek T."/>
            <person name="Theisen M.J."/>
            <person name="Garavito R.M."/>
            <person name="Benning C."/>
        </authorList>
    </citation>
    <scope>FUNCTION</scope>
    <scope>MUTAGENESIS OF THR-228</scope>
</reference>
<reference key="6">
    <citation type="journal article" date="2003" name="Plant Physiol.">
        <title>Changes in gene expression in Arabidopsis shoots during phosphate starvation and the potential for developing smart plants.</title>
        <authorList>
            <person name="Hammond J.P."/>
            <person name="Bennett M.J."/>
            <person name="Bowen H.C."/>
            <person name="Broadley M.R."/>
            <person name="Eastwood D.C."/>
            <person name="May S.T."/>
            <person name="Rahn C."/>
            <person name="Swarup R."/>
            <person name="Woolaway K.E."/>
            <person name="White P.J."/>
        </authorList>
    </citation>
    <scope>INDUCTION</scope>
</reference>
<reference key="7">
    <citation type="journal article" date="1999" name="Proc. Natl. Acad. Sci. U.S.A.">
        <title>Crystal structure of SQD1, an enzyme involved in the biosynthesis of the plant sulfolipid headgroup donor UDP-sulfoquinovose.</title>
        <authorList>
            <person name="Mulichak A.M."/>
            <person name="Theisen M.J."/>
            <person name="Essigmann B."/>
            <person name="Benning C."/>
            <person name="Garavito R.M."/>
        </authorList>
    </citation>
    <scope>X-RAY CRYSTALLOGRAPHY (1.6 ANGSTROMS) IN COMPLEX WITH NAD(+) AND UDP-GLUCOSE</scope>
    <scope>ACTIVE SITE</scope>
</reference>
<reference key="8">
    <citation type="submission" date="2001-02" db="PDB data bank">
        <title>Characterization of the active site of UDP-sulfoquinovose synthase: formation of the sulfonic acid product in the crystalline state.</title>
        <authorList>
            <person name="Theisen M.J."/>
            <person name="Sanda S.L."/>
            <person name="Ginell S.L."/>
            <person name="Benning C."/>
            <person name="Garavito R.M."/>
        </authorList>
    </citation>
    <scope>X-RAY CRYSTALLOGRAPHY (1.20 ANGSTROMS) OF 86-477 IN COMPLEX WITH NAD; UDP-GLUCOSE AND UDP-SULFOQUINOVOSE</scope>
</reference>
<protein>
    <recommendedName>
        <fullName>UDP-sulfoquinovose synthase, chloroplastic</fullName>
        <ecNumber>3.13.1.1</ecNumber>
    </recommendedName>
    <alternativeName>
        <fullName>Sulfite:UDP-glucose sulfotransferase</fullName>
    </alternativeName>
    <alternativeName>
        <fullName>Sulfolipid biosynthesis protein</fullName>
    </alternativeName>
</protein>